<evidence type="ECO:0000250" key="1">
    <source>
        <dbReference type="UniProtKB" id="P0AE01"/>
    </source>
</evidence>
<evidence type="ECO:0000305" key="2"/>
<comment type="function">
    <text evidence="1">Catalyzes the formation of 2'O-methylated cytidine (Cm32) or 2'O-methylated uridine (Um32) at position 32 in tRNA.</text>
</comment>
<comment type="catalytic activity">
    <reaction evidence="1">
        <text>cytidine(32) in tRNA + S-adenosyl-L-methionine = 2'-O-methylcytidine(32) in tRNA + S-adenosyl-L-homocysteine + H(+)</text>
        <dbReference type="Rhea" id="RHEA:42932"/>
        <dbReference type="Rhea" id="RHEA-COMP:10288"/>
        <dbReference type="Rhea" id="RHEA-COMP:10289"/>
        <dbReference type="ChEBI" id="CHEBI:15378"/>
        <dbReference type="ChEBI" id="CHEBI:57856"/>
        <dbReference type="ChEBI" id="CHEBI:59789"/>
        <dbReference type="ChEBI" id="CHEBI:74495"/>
        <dbReference type="ChEBI" id="CHEBI:82748"/>
        <dbReference type="EC" id="2.1.1.200"/>
    </reaction>
</comment>
<comment type="catalytic activity">
    <reaction evidence="1">
        <text>uridine(32) in tRNA + S-adenosyl-L-methionine = 2'-O-methyluridine(32) in tRNA + S-adenosyl-L-homocysteine + H(+)</text>
        <dbReference type="Rhea" id="RHEA:42936"/>
        <dbReference type="Rhea" id="RHEA-COMP:10107"/>
        <dbReference type="Rhea" id="RHEA-COMP:10290"/>
        <dbReference type="ChEBI" id="CHEBI:15378"/>
        <dbReference type="ChEBI" id="CHEBI:57856"/>
        <dbReference type="ChEBI" id="CHEBI:59789"/>
        <dbReference type="ChEBI" id="CHEBI:65315"/>
        <dbReference type="ChEBI" id="CHEBI:74478"/>
        <dbReference type="EC" id="2.1.1.200"/>
    </reaction>
</comment>
<comment type="subunit">
    <text evidence="1">Homodimer.</text>
</comment>
<comment type="subcellular location">
    <subcellularLocation>
        <location evidence="1">Cytoplasm</location>
    </subcellularLocation>
</comment>
<comment type="similarity">
    <text evidence="2">Belongs to the class IV-like SAM-binding methyltransferase superfamily. RNA methyltransferase TrmH family.</text>
</comment>
<reference key="1">
    <citation type="journal article" date="2006" name="PLoS Genet.">
        <title>The complete genome sequence and comparative genome analysis of the high pathogenicity Yersinia enterocolitica strain 8081.</title>
        <authorList>
            <person name="Thomson N.R."/>
            <person name="Howard S."/>
            <person name="Wren B.W."/>
            <person name="Holden M.T.G."/>
            <person name="Crossman L."/>
            <person name="Challis G.L."/>
            <person name="Churcher C."/>
            <person name="Mungall K."/>
            <person name="Brooks K."/>
            <person name="Chillingworth T."/>
            <person name="Feltwell T."/>
            <person name="Abdellah Z."/>
            <person name="Hauser H."/>
            <person name="Jagels K."/>
            <person name="Maddison M."/>
            <person name="Moule S."/>
            <person name="Sanders M."/>
            <person name="Whitehead S."/>
            <person name="Quail M.A."/>
            <person name="Dougan G."/>
            <person name="Parkhill J."/>
            <person name="Prentice M.B."/>
        </authorList>
    </citation>
    <scope>NUCLEOTIDE SEQUENCE [LARGE SCALE GENOMIC DNA]</scope>
    <source>
        <strain>NCTC 13174 / 8081</strain>
    </source>
</reference>
<keyword id="KW-0963">Cytoplasm</keyword>
<keyword id="KW-0489">Methyltransferase</keyword>
<keyword id="KW-0949">S-adenosyl-L-methionine</keyword>
<keyword id="KW-0808">Transferase</keyword>
<keyword id="KW-0819">tRNA processing</keyword>
<accession>A1JKQ0</accession>
<name>TRMJ_YERE8</name>
<gene>
    <name type="primary">trmJ</name>
    <name type="ordered locus">YE1055</name>
</gene>
<proteinExistence type="inferred from homology"/>
<dbReference type="EC" id="2.1.1.200" evidence="1"/>
<dbReference type="EMBL" id="AM286415">
    <property type="protein sequence ID" value="CAL11152.1"/>
    <property type="molecule type" value="Genomic_DNA"/>
</dbReference>
<dbReference type="RefSeq" id="WP_011815777.1">
    <property type="nucleotide sequence ID" value="NC_008800.1"/>
</dbReference>
<dbReference type="RefSeq" id="YP_001005387.1">
    <property type="nucleotide sequence ID" value="NC_008800.1"/>
</dbReference>
<dbReference type="SMR" id="A1JKQ0"/>
<dbReference type="GeneID" id="93969885"/>
<dbReference type="KEGG" id="yen:YE1055"/>
<dbReference type="PATRIC" id="fig|393305.7.peg.1151"/>
<dbReference type="eggNOG" id="COG0565">
    <property type="taxonomic scope" value="Bacteria"/>
</dbReference>
<dbReference type="HOGENOM" id="CLU_056931_0_1_6"/>
<dbReference type="OrthoDB" id="9806346at2"/>
<dbReference type="Proteomes" id="UP000000642">
    <property type="component" value="Chromosome"/>
</dbReference>
<dbReference type="GO" id="GO:0005829">
    <property type="term" value="C:cytosol"/>
    <property type="evidence" value="ECO:0007669"/>
    <property type="project" value="TreeGrafter"/>
</dbReference>
<dbReference type="GO" id="GO:0003723">
    <property type="term" value="F:RNA binding"/>
    <property type="evidence" value="ECO:0007669"/>
    <property type="project" value="InterPro"/>
</dbReference>
<dbReference type="GO" id="GO:0160206">
    <property type="term" value="F:tRNA (cytidine(32)/uridine(32)-2'-O)-methyltransferase activity"/>
    <property type="evidence" value="ECO:0007669"/>
    <property type="project" value="UniProtKB-EC"/>
</dbReference>
<dbReference type="GO" id="GO:0002128">
    <property type="term" value="P:tRNA nucleoside ribose methylation"/>
    <property type="evidence" value="ECO:0007669"/>
    <property type="project" value="TreeGrafter"/>
</dbReference>
<dbReference type="CDD" id="cd18093">
    <property type="entry name" value="SpoU-like_TrmJ"/>
    <property type="match status" value="1"/>
</dbReference>
<dbReference type="FunFam" id="1.10.8.590:FF:000001">
    <property type="entry name" value="tRNA:Cm32/Um32 methyltransferase"/>
    <property type="match status" value="1"/>
</dbReference>
<dbReference type="FunFam" id="3.40.1280.10:FF:000006">
    <property type="entry name" value="Uncharacterized tRNA/rRNA methyltransferase HI_0380"/>
    <property type="match status" value="1"/>
</dbReference>
<dbReference type="Gene3D" id="1.10.8.590">
    <property type="match status" value="1"/>
</dbReference>
<dbReference type="Gene3D" id="3.40.1280.10">
    <property type="match status" value="1"/>
</dbReference>
<dbReference type="InterPro" id="IPR029028">
    <property type="entry name" value="Alpha/beta_knot_MTases"/>
</dbReference>
<dbReference type="InterPro" id="IPR004384">
    <property type="entry name" value="RNA_MeTrfase_TrmJ/LasT"/>
</dbReference>
<dbReference type="InterPro" id="IPR001537">
    <property type="entry name" value="SpoU_MeTrfase"/>
</dbReference>
<dbReference type="InterPro" id="IPR029026">
    <property type="entry name" value="tRNA_m1G_MTases_N"/>
</dbReference>
<dbReference type="NCBIfam" id="NF011694">
    <property type="entry name" value="PRK15114.1"/>
    <property type="match status" value="1"/>
</dbReference>
<dbReference type="NCBIfam" id="TIGR00050">
    <property type="entry name" value="rRNA_methyl_1"/>
    <property type="match status" value="1"/>
</dbReference>
<dbReference type="PANTHER" id="PTHR42786:SF2">
    <property type="entry name" value="TRNA (CYTIDINE_URIDINE-2'-O-)-METHYLTRANSFERASE TRMJ"/>
    <property type="match status" value="1"/>
</dbReference>
<dbReference type="PANTHER" id="PTHR42786">
    <property type="entry name" value="TRNA/RRNA METHYLTRANSFERASE"/>
    <property type="match status" value="1"/>
</dbReference>
<dbReference type="Pfam" id="PF00588">
    <property type="entry name" value="SpoU_methylase"/>
    <property type="match status" value="1"/>
</dbReference>
<dbReference type="PIRSF" id="PIRSF004808">
    <property type="entry name" value="LasT"/>
    <property type="match status" value="1"/>
</dbReference>
<dbReference type="SUPFAM" id="SSF75217">
    <property type="entry name" value="alpha/beta knot"/>
    <property type="match status" value="1"/>
</dbReference>
<feature type="chain" id="PRO_0000313866" description="tRNA (cytidine/uridine-2'-O-)-methyltransferase TrmJ">
    <location>
        <begin position="1"/>
        <end position="257"/>
    </location>
</feature>
<feature type="binding site" evidence="1">
    <location>
        <begin position="79"/>
        <end position="81"/>
    </location>
    <ligand>
        <name>S-adenosyl-L-methionine</name>
        <dbReference type="ChEBI" id="CHEBI:59789"/>
    </ligand>
</feature>
<feature type="binding site" evidence="1">
    <location>
        <position position="114"/>
    </location>
    <ligand>
        <name>S-adenosyl-L-methionine</name>
        <dbReference type="ChEBI" id="CHEBI:59789"/>
    </ligand>
</feature>
<feature type="binding site" evidence="1">
    <location>
        <position position="134"/>
    </location>
    <ligand>
        <name>S-adenosyl-L-methionine</name>
        <dbReference type="ChEBI" id="CHEBI:59789"/>
    </ligand>
</feature>
<feature type="binding site" evidence="1">
    <location>
        <begin position="141"/>
        <end position="143"/>
    </location>
    <ligand>
        <name>S-adenosyl-L-methionine</name>
        <dbReference type="ChEBI" id="CHEBI:59789"/>
    </ligand>
</feature>
<sequence>MLHNIRIVLVETSHTGNMGSTARAMKTMGLTNLYLVNPLVKPDSQAIALSAGASDVIGNATIVDTLDEALAGCSLVVGTSARSRTLPWPMLEPRECGVRSAREAEHAPVALVFGRERVGLTNDELQKCHYHVAIPANPEYSSLNLAMAVQILAYEVRVAFLDRQQAAAPIVEEEEAPYPLVDDLERFYLHLEQVLSHTGFIRQAHPGQIMSKLRRLFTRARPEAQELNILRGMLTSIEKQDKYPQRGADGSEHNGKN</sequence>
<organism>
    <name type="scientific">Yersinia enterocolitica serotype O:8 / biotype 1B (strain NCTC 13174 / 8081)</name>
    <dbReference type="NCBI Taxonomy" id="393305"/>
    <lineage>
        <taxon>Bacteria</taxon>
        <taxon>Pseudomonadati</taxon>
        <taxon>Pseudomonadota</taxon>
        <taxon>Gammaproteobacteria</taxon>
        <taxon>Enterobacterales</taxon>
        <taxon>Yersiniaceae</taxon>
        <taxon>Yersinia</taxon>
    </lineage>
</organism>
<protein>
    <recommendedName>
        <fullName evidence="1">tRNA (cytidine/uridine-2'-O-)-methyltransferase TrmJ</fullName>
        <ecNumber evidence="1">2.1.1.200</ecNumber>
    </recommendedName>
    <alternativeName>
        <fullName evidence="1">tRNA (cytidine(32)/uridine(32)-2'-O)-methyltransferase</fullName>
    </alternativeName>
    <alternativeName>
        <fullName evidence="1">tRNA Cm32/Um32 methyltransferase</fullName>
    </alternativeName>
</protein>